<gene>
    <name type="primary">lktD</name>
</gene>
<evidence type="ECO:0000255" key="1"/>
<evidence type="ECO:0000305" key="2"/>
<name>HLYD_PASSP</name>
<sequence length="478" mass="54650">MKIWLSGIYEFFLRYKNIWVEVWKIRKELDHPNRKKDESEFLPAHLELIETPVSKKPRLIAYLIMLFLAVAIVLASVSKVEIVATAPGKLTFSGRSKEIKPIENTIVQEIFVKDGQFVEKGQLLVSLTALGSDADIKKTITSLSLAKLENYRYQTLLTAIEKESLPVIDLSNTEFKDSSEEDRLRIKHLIEEQYTTWQKQKTQKTLAYKRKDAEKQTISAYVRKYEGATRIEQEKLKDFRKLYQQKSLSKHELLSQENKAIEAQNELAVYRSKLNELESDLLNVKEELELITQFFKSDVLEKLKQHIENERQLQLELEKNNQRRQASMIRAPVSGTVQQLKIHTIGGVVTTAETLMIIVPEDDVLEATALIQNKDIGFVAAGQEVIIKVETFPYTRYGYITGRIKHISPDAIEQPNLGLVFNATVSIDKQALSSPDGHKIELGLGMTITAEIKTGERSVMSYLLSPLEESVTESLRER</sequence>
<comment type="function">
    <text>Involved in the transport of the Leukotoxin.</text>
</comment>
<comment type="subcellular location">
    <subcellularLocation>
        <location evidence="2">Cell inner membrane</location>
        <topology evidence="2">Single-pass membrane protein</topology>
    </subcellularLocation>
</comment>
<comment type="similarity">
    <text evidence="2">Belongs to the membrane fusion protein (MFP) (TC 8.A.1) family.</text>
</comment>
<feature type="chain" id="PRO_0000201877" description="Leukotoxin secretion protein D">
    <location>
        <begin position="1"/>
        <end position="478"/>
    </location>
</feature>
<feature type="topological domain" description="Cytoplasmic" evidence="1">
    <location>
        <begin position="1"/>
        <end position="77"/>
    </location>
</feature>
<feature type="transmembrane region" description="Helical" evidence="1">
    <location>
        <begin position="78"/>
        <end position="98"/>
    </location>
</feature>
<feature type="topological domain" description="Periplasmic" evidence="1">
    <location>
        <begin position="99"/>
        <end position="478"/>
    </location>
</feature>
<keyword id="KW-0997">Cell inner membrane</keyword>
<keyword id="KW-1003">Cell membrane</keyword>
<keyword id="KW-0204">Cytolysis</keyword>
<keyword id="KW-0354">Hemolysis</keyword>
<keyword id="KW-0472">Membrane</keyword>
<keyword id="KW-0812">Transmembrane</keyword>
<keyword id="KW-1133">Transmembrane helix</keyword>
<keyword id="KW-0813">Transport</keyword>
<dbReference type="EMBL" id="L12148">
    <property type="protein sequence ID" value="AAA16446.1"/>
    <property type="molecule type" value="Genomic_DNA"/>
</dbReference>
<dbReference type="SMR" id="P55125"/>
<dbReference type="GO" id="GO:0005886">
    <property type="term" value="C:plasma membrane"/>
    <property type="evidence" value="ECO:0007669"/>
    <property type="project" value="UniProtKB-SubCell"/>
</dbReference>
<dbReference type="GO" id="GO:0031640">
    <property type="term" value="P:killing of cells of another organism"/>
    <property type="evidence" value="ECO:0007669"/>
    <property type="project" value="UniProtKB-KW"/>
</dbReference>
<dbReference type="GO" id="GO:0009306">
    <property type="term" value="P:protein secretion"/>
    <property type="evidence" value="ECO:0007669"/>
    <property type="project" value="InterPro"/>
</dbReference>
<dbReference type="GO" id="GO:0055085">
    <property type="term" value="P:transmembrane transport"/>
    <property type="evidence" value="ECO:0007669"/>
    <property type="project" value="InterPro"/>
</dbReference>
<dbReference type="Gene3D" id="2.40.30.170">
    <property type="match status" value="1"/>
</dbReference>
<dbReference type="InterPro" id="IPR050739">
    <property type="entry name" value="MFP"/>
</dbReference>
<dbReference type="InterPro" id="IPR006144">
    <property type="entry name" value="Secretion_HlyD_CS"/>
</dbReference>
<dbReference type="InterPro" id="IPR010129">
    <property type="entry name" value="T1SS_HlyD"/>
</dbReference>
<dbReference type="NCBIfam" id="TIGR01843">
    <property type="entry name" value="type_I_hlyD"/>
    <property type="match status" value="1"/>
</dbReference>
<dbReference type="PANTHER" id="PTHR30386:SF27">
    <property type="entry name" value="MEMBRANE FUSION PROTEIN (MFP) FAMILY PROTEIN"/>
    <property type="match status" value="1"/>
</dbReference>
<dbReference type="PANTHER" id="PTHR30386">
    <property type="entry name" value="MEMBRANE FUSION SUBUNIT OF EMRAB-TOLC MULTIDRUG EFFLUX PUMP"/>
    <property type="match status" value="1"/>
</dbReference>
<dbReference type="Pfam" id="PF13437">
    <property type="entry name" value="HlyD_3"/>
    <property type="match status" value="1"/>
</dbReference>
<dbReference type="PRINTS" id="PR01490">
    <property type="entry name" value="RTXTOXIND"/>
</dbReference>
<dbReference type="SUPFAM" id="SSF111369">
    <property type="entry name" value="HlyD-like secretion proteins"/>
    <property type="match status" value="1"/>
</dbReference>
<dbReference type="PROSITE" id="PS00543">
    <property type="entry name" value="HLYD_FAMILY"/>
    <property type="match status" value="1"/>
</dbReference>
<reference key="1">
    <citation type="journal article" date="1993" name="Infect. Immun.">
        <title>Molecular characterization of a leukotoxin gene from a Pasteurella haemolytica-like organism, encoding a new member of the RTX toxin family.</title>
        <authorList>
            <person name="Chang Y.-F."/>
            <person name="Ma D.-P."/>
            <person name="Shi J."/>
            <person name="Chengappa M.M."/>
        </authorList>
    </citation>
    <scope>NUCLEOTIDE SEQUENCE [GENOMIC DNA]</scope>
</reference>
<protein>
    <recommendedName>
        <fullName>Leukotoxin secretion protein D</fullName>
    </recommendedName>
</protein>
<accession>P55125</accession>
<proteinExistence type="inferred from homology"/>
<organism>
    <name type="scientific">Pasteurella haemolytica-like sp. (strain 5943B)</name>
    <dbReference type="NCBI Taxonomy" id="53500"/>
    <lineage>
        <taxon>Bacteria</taxon>
        <taxon>Pseudomonadati</taxon>
        <taxon>Pseudomonadota</taxon>
        <taxon>Gammaproteobacteria</taxon>
        <taxon>Pasteurellales</taxon>
        <taxon>Pasteurellaceae</taxon>
        <taxon>Mannheimia</taxon>
    </lineage>
</organism>